<reference key="1">
    <citation type="submission" date="2005-11" db="EMBL/GenBank/DDBJ databases">
        <authorList>
            <consortium name="NIH - Mammalian Gene Collection (MGC) project"/>
        </authorList>
    </citation>
    <scope>NUCLEOTIDE SEQUENCE [LARGE SCALE MRNA]</scope>
    <source>
        <strain>Hereford</strain>
        <tissue>Fetal liver</tissue>
    </source>
</reference>
<proteinExistence type="evidence at transcript level"/>
<comment type="function">
    <text evidence="1">Probably plays a crucial role in the binding of the barbed end of actin filaments to the plasma membrane.</text>
</comment>
<comment type="activity regulation">
    <text evidence="1">A head-to-tail association, of the N-terminal and C-terminal halves results in a closed conformation (inactive form) which is incapable of actin or membrane-binding.</text>
</comment>
<comment type="subunit">
    <text evidence="2 3">Interacts with CPNE1 (via VWFA domain) and CPNE4 (via VWFA domain). Binds NHERF1. Interacts with NHERF1, NHERF2, LAYN, MME/NEP and ICAM2. Interacts (via FERM domain) with SPN/CD43 cytoplasmic tail (By similarity). Interacts with CD44 (By similarity). Interacts with CLIC5; may work together in a complex which also includes EZR and MYO6 to stabilize linkages between the plasma membrane and subjacent actin cytoskeleton at the base of stereocilia (By similarity).</text>
</comment>
<comment type="subcellular location">
    <subcellularLocation>
        <location evidence="1">Cell membrane</location>
        <topology evidence="1">Peripheral membrane protein</topology>
        <orientation evidence="1">Cytoplasmic side</orientation>
    </subcellularLocation>
    <subcellularLocation>
        <location evidence="1">Cytoplasm</location>
        <location evidence="1">Cytoskeleton</location>
    </subcellularLocation>
    <subcellularLocation>
        <location>Cleavage furrow</location>
    </subcellularLocation>
    <subcellularLocation>
        <location evidence="2">Cell projection</location>
        <location evidence="2">Microvillus</location>
    </subcellularLocation>
    <subcellularLocation>
        <location evidence="2">Cell projection</location>
        <location evidence="2">Stereocilium</location>
    </subcellularLocation>
    <text evidence="1 2">Enriched at the stereocilium base with very low levels in the shaft of stereociliary bundles (By similarity). Highly concentrated in the undercoat of the cell-to-cell adherens junction and the cleavage furrow in the interphase and mitotic phase, respectively.</text>
</comment>
<comment type="domain">
    <text evidence="1">The N-terminal domain interacts with the C-terminal domain of LAYN. An interdomain interaction between its N-terminal and C-terminal domains inhibits its ability to bind LAYN. In the presence of acidic phospholipids, the interdomain interaction is inhibited and this enhances binding to LAYN (By similarity).</text>
</comment>
<comment type="PTM">
    <text evidence="1">Phosphorylated by tyrosine-protein kinases. Phosphorylation by ROCK2 suppresses the head-to-tail association of the N-terminal and C-terminal halves resulting in an opened conformation which is capable of actin and membrane-binding (By similarity).</text>
</comment>
<organism>
    <name type="scientific">Bos taurus</name>
    <name type="common">Bovine</name>
    <dbReference type="NCBI Taxonomy" id="9913"/>
    <lineage>
        <taxon>Eukaryota</taxon>
        <taxon>Metazoa</taxon>
        <taxon>Chordata</taxon>
        <taxon>Craniata</taxon>
        <taxon>Vertebrata</taxon>
        <taxon>Euteleostomi</taxon>
        <taxon>Mammalia</taxon>
        <taxon>Eutheria</taxon>
        <taxon>Laurasiatheria</taxon>
        <taxon>Artiodactyla</taxon>
        <taxon>Ruminantia</taxon>
        <taxon>Pecora</taxon>
        <taxon>Bovidae</taxon>
        <taxon>Bovinae</taxon>
        <taxon>Bos</taxon>
    </lineage>
</organism>
<protein>
    <recommendedName>
        <fullName>Radixin</fullName>
    </recommendedName>
</protein>
<gene>
    <name type="primary">RDX</name>
</gene>
<accession>Q32LP2</accession>
<keyword id="KW-0117">Actin capping</keyword>
<keyword id="KW-0009">Actin-binding</keyword>
<keyword id="KW-1003">Cell membrane</keyword>
<keyword id="KW-0966">Cell projection</keyword>
<keyword id="KW-0963">Cytoplasm</keyword>
<keyword id="KW-0206">Cytoskeleton</keyword>
<keyword id="KW-0472">Membrane</keyword>
<keyword id="KW-0597">Phosphoprotein</keyword>
<keyword id="KW-1185">Reference proteome</keyword>
<name>RADI_BOVIN</name>
<feature type="chain" id="PRO_0000254652" description="Radixin">
    <location>
        <begin position="1"/>
        <end position="583"/>
    </location>
</feature>
<feature type="domain" description="FERM" evidence="4">
    <location>
        <begin position="5"/>
        <end position="295"/>
    </location>
</feature>
<feature type="region of interest" description="Disordered" evidence="5">
    <location>
        <begin position="309"/>
        <end position="336"/>
    </location>
</feature>
<feature type="region of interest" description="Disordered" evidence="5">
    <location>
        <begin position="374"/>
        <end position="407"/>
    </location>
</feature>
<feature type="region of interest" description="Disordered" evidence="5">
    <location>
        <begin position="460"/>
        <end position="526"/>
    </location>
</feature>
<feature type="compositionally biased region" description="Basic and acidic residues" evidence="5">
    <location>
        <begin position="374"/>
        <end position="400"/>
    </location>
</feature>
<feature type="compositionally biased region" description="Pro residues" evidence="5">
    <location>
        <begin position="469"/>
        <end position="480"/>
    </location>
</feature>
<feature type="compositionally biased region" description="Basic and acidic residues" evidence="5">
    <location>
        <begin position="483"/>
        <end position="492"/>
    </location>
</feature>
<feature type="compositionally biased region" description="Basic and acidic residues" evidence="5">
    <location>
        <begin position="506"/>
        <end position="525"/>
    </location>
</feature>
<feature type="binding site" evidence="1">
    <location>
        <begin position="60"/>
        <end position="63"/>
    </location>
    <ligand>
        <name>a 1,2-diacyl-sn-glycero-3-phospho-(1D-myo-inositol)</name>
        <dbReference type="ChEBI" id="CHEBI:57880"/>
    </ligand>
</feature>
<feature type="binding site" evidence="1">
    <location>
        <position position="278"/>
    </location>
    <ligand>
        <name>a 1,2-diacyl-sn-glycero-3-phospho-(1D-myo-inositol)</name>
        <dbReference type="ChEBI" id="CHEBI:57880"/>
    </ligand>
</feature>
<feature type="modified residue" description="N6-succinyllysine" evidence="2">
    <location>
        <position position="83"/>
    </location>
</feature>
<feature type="modified residue" description="Phosphothreonine; by ROCK2" evidence="2">
    <location>
        <position position="564"/>
    </location>
</feature>
<sequence length="583" mass="68568">MPKPINVRVTTMDAELEFAIQPNTTGKQLFDQVVKTVGLREVWFFGLQYVDSKGYSTWLKLNKKVTQQDVKKENPLQFKFRAKFFPEDVSEELIQEITQRLFFLQVKEAILNDEIYCPPETAVLLASYAVQAKYGDYNKEIHKPGYLANDRLLPQRVLEQHKLTKEQWEERIQNWHEEHRGMLREDSMMEYLKIAQDLEMYGVNYFEIKNKKGTELWLGVDALGLNIYEHDDKLTPKIGFPWSEIRNISFNDKKFVIKPIDKKAPDFVFYAPRLRINKRILALCMGNHELYMRRRKPDTIEVQQMKAQAREEKHQKQLERAQLENEKKKREIAEKEKERIEREKEELMERLRQIEEQTMKAQKELEEQTRKALELDQERKRAKEEAERLEKERQAAEEAKSALAKQAADQMKNQEQLAAELAEFTAKIALLEEAKKKKEEEATEWQHKAFAAQEDLEKTKEELKTVMSAPPPPPPPPVIPPTENEHDEHDENNAEASAELSNDGVMNHRSEEERVTETQKNERVKKQLQALSSELAQARDETKKTQNDVLHAENVKAGRDKYKTLRQIRQGNTKQRIDEFEAM</sequence>
<evidence type="ECO:0000250" key="1"/>
<evidence type="ECO:0000250" key="2">
    <source>
        <dbReference type="UniProtKB" id="P26043"/>
    </source>
</evidence>
<evidence type="ECO:0000250" key="3">
    <source>
        <dbReference type="UniProtKB" id="P35241"/>
    </source>
</evidence>
<evidence type="ECO:0000255" key="4">
    <source>
        <dbReference type="PROSITE-ProRule" id="PRU00084"/>
    </source>
</evidence>
<evidence type="ECO:0000256" key="5">
    <source>
        <dbReference type="SAM" id="MobiDB-lite"/>
    </source>
</evidence>
<dbReference type="EMBL" id="BC109485">
    <property type="protein sequence ID" value="AAI09486.1"/>
    <property type="molecule type" value="mRNA"/>
</dbReference>
<dbReference type="RefSeq" id="NP_001069217.1">
    <property type="nucleotide sequence ID" value="NM_001075749.1"/>
</dbReference>
<dbReference type="SMR" id="Q32LP2"/>
<dbReference type="FunCoup" id="Q32LP2">
    <property type="interactions" value="1964"/>
</dbReference>
<dbReference type="IntAct" id="Q32LP2">
    <property type="interactions" value="1"/>
</dbReference>
<dbReference type="STRING" id="9913.ENSBTAP00000006129"/>
<dbReference type="PaxDb" id="9913-ENSBTAP00000006129"/>
<dbReference type="PeptideAtlas" id="Q32LP2"/>
<dbReference type="Ensembl" id="ENSBTAT00000006129.5">
    <property type="protein sequence ID" value="ENSBTAP00000006129.5"/>
    <property type="gene ID" value="ENSBTAG00000004672.7"/>
</dbReference>
<dbReference type="GeneID" id="517111"/>
<dbReference type="KEGG" id="bta:517111"/>
<dbReference type="CTD" id="5962"/>
<dbReference type="VEuPathDB" id="HostDB:ENSBTAG00000004672"/>
<dbReference type="VGNC" id="VGNC:33845">
    <property type="gene designation" value="RDX"/>
</dbReference>
<dbReference type="eggNOG" id="KOG3529">
    <property type="taxonomic scope" value="Eukaryota"/>
</dbReference>
<dbReference type="GeneTree" id="ENSGT01090000260082"/>
<dbReference type="InParanoid" id="Q32LP2"/>
<dbReference type="OMA" id="DMKTQET"/>
<dbReference type="OrthoDB" id="6018897at2759"/>
<dbReference type="Proteomes" id="UP000009136">
    <property type="component" value="Chromosome 15"/>
</dbReference>
<dbReference type="Bgee" id="ENSBTAG00000004672">
    <property type="expression patterns" value="Expressed in omental fat pad and 109 other cell types or tissues"/>
</dbReference>
<dbReference type="GO" id="GO:0005912">
    <property type="term" value="C:adherens junction"/>
    <property type="evidence" value="ECO:0000318"/>
    <property type="project" value="GO_Central"/>
</dbReference>
<dbReference type="GO" id="GO:0045177">
    <property type="term" value="C:apical part of cell"/>
    <property type="evidence" value="ECO:0000318"/>
    <property type="project" value="GO_Central"/>
</dbReference>
<dbReference type="GO" id="GO:0032154">
    <property type="term" value="C:cleavage furrow"/>
    <property type="evidence" value="ECO:0007669"/>
    <property type="project" value="UniProtKB-SubCell"/>
</dbReference>
<dbReference type="GO" id="GO:0005737">
    <property type="term" value="C:cytoplasm"/>
    <property type="evidence" value="ECO:0007669"/>
    <property type="project" value="UniProtKB-KW"/>
</dbReference>
<dbReference type="GO" id="GO:0005856">
    <property type="term" value="C:cytoskeleton"/>
    <property type="evidence" value="ECO:0007669"/>
    <property type="project" value="UniProtKB-SubCell"/>
</dbReference>
<dbReference type="GO" id="GO:0030175">
    <property type="term" value="C:filopodium"/>
    <property type="evidence" value="ECO:0000318"/>
    <property type="project" value="GO_Central"/>
</dbReference>
<dbReference type="GO" id="GO:0005902">
    <property type="term" value="C:microvillus"/>
    <property type="evidence" value="ECO:0000250"/>
    <property type="project" value="UniProtKB"/>
</dbReference>
<dbReference type="GO" id="GO:0005886">
    <property type="term" value="C:plasma membrane"/>
    <property type="evidence" value="ECO:0000318"/>
    <property type="project" value="GO_Central"/>
</dbReference>
<dbReference type="GO" id="GO:0120044">
    <property type="term" value="C:stereocilium base"/>
    <property type="evidence" value="ECO:0000250"/>
    <property type="project" value="UniProtKB"/>
</dbReference>
<dbReference type="GO" id="GO:0003779">
    <property type="term" value="F:actin binding"/>
    <property type="evidence" value="ECO:0000318"/>
    <property type="project" value="GO_Central"/>
</dbReference>
<dbReference type="GO" id="GO:0050839">
    <property type="term" value="F:cell adhesion molecule binding"/>
    <property type="evidence" value="ECO:0000318"/>
    <property type="project" value="GO_Central"/>
</dbReference>
<dbReference type="GO" id="GO:0051693">
    <property type="term" value="P:actin filament capping"/>
    <property type="evidence" value="ECO:0007669"/>
    <property type="project" value="UniProtKB-KW"/>
</dbReference>
<dbReference type="GO" id="GO:2000643">
    <property type="term" value="P:positive regulation of early endosome to late endosome transport"/>
    <property type="evidence" value="ECO:0000318"/>
    <property type="project" value="GO_Central"/>
</dbReference>
<dbReference type="GO" id="GO:1902966">
    <property type="term" value="P:positive regulation of protein localization to early endosome"/>
    <property type="evidence" value="ECO:0000318"/>
    <property type="project" value="GO_Central"/>
</dbReference>
<dbReference type="GO" id="GO:0008360">
    <property type="term" value="P:regulation of cell shape"/>
    <property type="evidence" value="ECO:0000318"/>
    <property type="project" value="GO_Central"/>
</dbReference>
<dbReference type="GO" id="GO:1902115">
    <property type="term" value="P:regulation of organelle assembly"/>
    <property type="evidence" value="ECO:0000318"/>
    <property type="project" value="GO_Central"/>
</dbReference>
<dbReference type="CDD" id="cd14473">
    <property type="entry name" value="FERM_B-lobe"/>
    <property type="match status" value="1"/>
</dbReference>
<dbReference type="CDD" id="cd13194">
    <property type="entry name" value="FERM_C_ERM"/>
    <property type="match status" value="1"/>
</dbReference>
<dbReference type="CDD" id="cd17187">
    <property type="entry name" value="FERM_F1_ERM"/>
    <property type="match status" value="1"/>
</dbReference>
<dbReference type="FunFam" id="2.30.29.30:FF:000003">
    <property type="entry name" value="Radixin isoform 1"/>
    <property type="match status" value="1"/>
</dbReference>
<dbReference type="FunFam" id="1.20.80.10:FF:000002">
    <property type="entry name" value="radixin isoform X1"/>
    <property type="match status" value="1"/>
</dbReference>
<dbReference type="FunFam" id="3.10.20.90:FF:000013">
    <property type="entry name" value="radixin isoform X1"/>
    <property type="match status" value="1"/>
</dbReference>
<dbReference type="FunFam" id="1.20.5.450:FF:000001">
    <property type="entry name" value="radixin isoform X2"/>
    <property type="match status" value="1"/>
</dbReference>
<dbReference type="Gene3D" id="1.20.5.450">
    <property type="match status" value="1"/>
</dbReference>
<dbReference type="Gene3D" id="1.20.80.10">
    <property type="match status" value="1"/>
</dbReference>
<dbReference type="Gene3D" id="6.10.360.10">
    <property type="match status" value="1"/>
</dbReference>
<dbReference type="Gene3D" id="3.10.20.90">
    <property type="entry name" value="Phosphatidylinositol 3-kinase Catalytic Subunit, Chain A, domain 1"/>
    <property type="match status" value="1"/>
</dbReference>
<dbReference type="Gene3D" id="2.30.29.30">
    <property type="entry name" value="Pleckstrin-homology domain (PH domain)/Phosphotyrosine-binding domain (PTB)"/>
    <property type="match status" value="1"/>
</dbReference>
<dbReference type="InterPro" id="IPR019749">
    <property type="entry name" value="Band_41_domain"/>
</dbReference>
<dbReference type="InterPro" id="IPR011174">
    <property type="entry name" value="ERM"/>
</dbReference>
<dbReference type="InterPro" id="IPR011259">
    <property type="entry name" value="ERM_C_dom"/>
</dbReference>
<dbReference type="InterPro" id="IPR041789">
    <property type="entry name" value="ERM_FERM_C"/>
</dbReference>
<dbReference type="InterPro" id="IPR046810">
    <property type="entry name" value="ERM_helical"/>
</dbReference>
<dbReference type="InterPro" id="IPR000798">
    <property type="entry name" value="Ez/rad/moesin-like"/>
</dbReference>
<dbReference type="InterPro" id="IPR014352">
    <property type="entry name" value="FERM/acyl-CoA-bd_prot_sf"/>
</dbReference>
<dbReference type="InterPro" id="IPR035963">
    <property type="entry name" value="FERM_2"/>
</dbReference>
<dbReference type="InterPro" id="IPR019748">
    <property type="entry name" value="FERM_central"/>
</dbReference>
<dbReference type="InterPro" id="IPR019747">
    <property type="entry name" value="FERM_CS"/>
</dbReference>
<dbReference type="InterPro" id="IPR000299">
    <property type="entry name" value="FERM_domain"/>
</dbReference>
<dbReference type="InterPro" id="IPR018979">
    <property type="entry name" value="FERM_N"/>
</dbReference>
<dbReference type="InterPro" id="IPR018980">
    <property type="entry name" value="FERM_PH-like_C"/>
</dbReference>
<dbReference type="InterPro" id="IPR008954">
    <property type="entry name" value="Moesin_tail_sf"/>
</dbReference>
<dbReference type="InterPro" id="IPR011993">
    <property type="entry name" value="PH-like_dom_sf"/>
</dbReference>
<dbReference type="InterPro" id="IPR029071">
    <property type="entry name" value="Ubiquitin-like_domsf"/>
</dbReference>
<dbReference type="PANTHER" id="PTHR23281">
    <property type="entry name" value="MERLIN/MOESIN/EZRIN/RADIXIN"/>
    <property type="match status" value="1"/>
</dbReference>
<dbReference type="Pfam" id="PF00769">
    <property type="entry name" value="ERM_C"/>
    <property type="match status" value="1"/>
</dbReference>
<dbReference type="Pfam" id="PF20492">
    <property type="entry name" value="ERM_helical"/>
    <property type="match status" value="1"/>
</dbReference>
<dbReference type="Pfam" id="PF09380">
    <property type="entry name" value="FERM_C"/>
    <property type="match status" value="1"/>
</dbReference>
<dbReference type="Pfam" id="PF00373">
    <property type="entry name" value="FERM_M"/>
    <property type="match status" value="1"/>
</dbReference>
<dbReference type="Pfam" id="PF09379">
    <property type="entry name" value="FERM_N"/>
    <property type="match status" value="1"/>
</dbReference>
<dbReference type="PIRSF" id="PIRSF002305">
    <property type="entry name" value="ERM"/>
    <property type="match status" value="1"/>
</dbReference>
<dbReference type="PRINTS" id="PR00935">
    <property type="entry name" value="BAND41"/>
</dbReference>
<dbReference type="PRINTS" id="PR00661">
    <property type="entry name" value="ERMFAMILY"/>
</dbReference>
<dbReference type="SMART" id="SM00295">
    <property type="entry name" value="B41"/>
    <property type="match status" value="1"/>
</dbReference>
<dbReference type="SMART" id="SM01196">
    <property type="entry name" value="FERM_C"/>
    <property type="match status" value="1"/>
</dbReference>
<dbReference type="SUPFAM" id="SSF48678">
    <property type="entry name" value="Moesin tail domain"/>
    <property type="match status" value="1"/>
</dbReference>
<dbReference type="SUPFAM" id="SSF50729">
    <property type="entry name" value="PH domain-like"/>
    <property type="match status" value="1"/>
</dbReference>
<dbReference type="SUPFAM" id="SSF47031">
    <property type="entry name" value="Second domain of FERM"/>
    <property type="match status" value="1"/>
</dbReference>
<dbReference type="SUPFAM" id="SSF54236">
    <property type="entry name" value="Ubiquitin-like"/>
    <property type="match status" value="1"/>
</dbReference>
<dbReference type="PROSITE" id="PS00660">
    <property type="entry name" value="FERM_1"/>
    <property type="match status" value="1"/>
</dbReference>
<dbReference type="PROSITE" id="PS00661">
    <property type="entry name" value="FERM_2"/>
    <property type="match status" value="1"/>
</dbReference>
<dbReference type="PROSITE" id="PS50057">
    <property type="entry name" value="FERM_3"/>
    <property type="match status" value="1"/>
</dbReference>